<name>PHY_ADICA</name>
<dbReference type="EMBL" id="AB016168">
    <property type="protein sequence ID" value="BAA31856.1"/>
    <property type="molecule type" value="mRNA"/>
</dbReference>
<dbReference type="EMBL" id="AB016151">
    <property type="protein sequence ID" value="BAA31710.1"/>
    <property type="molecule type" value="Genomic_DNA"/>
</dbReference>
<dbReference type="SMR" id="P42496"/>
<dbReference type="GO" id="GO:0009881">
    <property type="term" value="F:photoreceptor activity"/>
    <property type="evidence" value="ECO:0007669"/>
    <property type="project" value="UniProtKB-KW"/>
</dbReference>
<dbReference type="GO" id="GO:0042803">
    <property type="term" value="F:protein homodimerization activity"/>
    <property type="evidence" value="ECO:0007669"/>
    <property type="project" value="InterPro"/>
</dbReference>
<dbReference type="GO" id="GO:0009584">
    <property type="term" value="P:detection of visible light"/>
    <property type="evidence" value="ECO:0007669"/>
    <property type="project" value="InterPro"/>
</dbReference>
<dbReference type="GO" id="GO:0009585">
    <property type="term" value="P:red, far-red light phototransduction"/>
    <property type="evidence" value="ECO:0007669"/>
    <property type="project" value="InterPro"/>
</dbReference>
<dbReference type="GO" id="GO:0006355">
    <property type="term" value="P:regulation of DNA-templated transcription"/>
    <property type="evidence" value="ECO:0007669"/>
    <property type="project" value="InterPro"/>
</dbReference>
<dbReference type="CDD" id="cd16932">
    <property type="entry name" value="HATPase_Phy-like"/>
    <property type="match status" value="1"/>
</dbReference>
<dbReference type="CDD" id="cd00130">
    <property type="entry name" value="PAS"/>
    <property type="match status" value="2"/>
</dbReference>
<dbReference type="FunFam" id="3.30.450.20:FF:000039">
    <property type="entry name" value="Phytochrome"/>
    <property type="match status" value="1"/>
</dbReference>
<dbReference type="FunFam" id="3.30.450.270:FF:000001">
    <property type="entry name" value="Phytochrome"/>
    <property type="match status" value="1"/>
</dbReference>
<dbReference type="Gene3D" id="3.30.450.270">
    <property type="match status" value="1"/>
</dbReference>
<dbReference type="Gene3D" id="3.30.450.40">
    <property type="match status" value="1"/>
</dbReference>
<dbReference type="Gene3D" id="3.30.565.10">
    <property type="entry name" value="Histidine kinase-like ATPase, C-terminal domain"/>
    <property type="match status" value="1"/>
</dbReference>
<dbReference type="Gene3D" id="3.30.450.20">
    <property type="entry name" value="PAS domain"/>
    <property type="match status" value="3"/>
</dbReference>
<dbReference type="InterPro" id="IPR003018">
    <property type="entry name" value="GAF"/>
</dbReference>
<dbReference type="InterPro" id="IPR029016">
    <property type="entry name" value="GAF-like_dom_sf"/>
</dbReference>
<dbReference type="InterPro" id="IPR036890">
    <property type="entry name" value="HATPase_C_sf"/>
</dbReference>
<dbReference type="InterPro" id="IPR005467">
    <property type="entry name" value="His_kinase_dom"/>
</dbReference>
<dbReference type="InterPro" id="IPR000014">
    <property type="entry name" value="PAS"/>
</dbReference>
<dbReference type="InterPro" id="IPR035965">
    <property type="entry name" value="PAS-like_dom_sf"/>
</dbReference>
<dbReference type="InterPro" id="IPR013654">
    <property type="entry name" value="PAS_2"/>
</dbReference>
<dbReference type="InterPro" id="IPR013767">
    <property type="entry name" value="PAS_fold"/>
</dbReference>
<dbReference type="InterPro" id="IPR044767">
    <property type="entry name" value="Phy_HATPase-like"/>
</dbReference>
<dbReference type="InterPro" id="IPR016132">
    <property type="entry name" value="Phyto_chromo_attachment"/>
</dbReference>
<dbReference type="InterPro" id="IPR013516">
    <property type="entry name" value="Phyto_chromo_BS"/>
</dbReference>
<dbReference type="InterPro" id="IPR001294">
    <property type="entry name" value="Phytochrome"/>
</dbReference>
<dbReference type="InterPro" id="IPR012129">
    <property type="entry name" value="Phytochrome_A-E"/>
</dbReference>
<dbReference type="InterPro" id="IPR013515">
    <property type="entry name" value="Phytochrome_cen-reg"/>
</dbReference>
<dbReference type="InterPro" id="IPR043150">
    <property type="entry name" value="Phytochrome_PHY_sf"/>
</dbReference>
<dbReference type="NCBIfam" id="TIGR00229">
    <property type="entry name" value="sensory_box"/>
    <property type="match status" value="1"/>
</dbReference>
<dbReference type="PANTHER" id="PTHR47876">
    <property type="entry name" value="OS08G0260000 PROTEIN"/>
    <property type="match status" value="1"/>
</dbReference>
<dbReference type="PANTHER" id="PTHR47876:SF3">
    <property type="entry name" value="PHYTOCHROME 1"/>
    <property type="match status" value="1"/>
</dbReference>
<dbReference type="Pfam" id="PF01590">
    <property type="entry name" value="GAF"/>
    <property type="match status" value="1"/>
</dbReference>
<dbReference type="Pfam" id="PF02518">
    <property type="entry name" value="HATPase_c"/>
    <property type="match status" value="1"/>
</dbReference>
<dbReference type="Pfam" id="PF00989">
    <property type="entry name" value="PAS"/>
    <property type="match status" value="2"/>
</dbReference>
<dbReference type="Pfam" id="PF08446">
    <property type="entry name" value="PAS_2"/>
    <property type="match status" value="1"/>
</dbReference>
<dbReference type="Pfam" id="PF00360">
    <property type="entry name" value="PHY"/>
    <property type="match status" value="1"/>
</dbReference>
<dbReference type="PIRSF" id="PIRSF000084">
    <property type="entry name" value="Phytochrome"/>
    <property type="match status" value="1"/>
</dbReference>
<dbReference type="PRINTS" id="PR01033">
    <property type="entry name" value="PHYTOCHROME"/>
</dbReference>
<dbReference type="SMART" id="SM00065">
    <property type="entry name" value="GAF"/>
    <property type="match status" value="1"/>
</dbReference>
<dbReference type="SMART" id="SM00387">
    <property type="entry name" value="HATPase_c"/>
    <property type="match status" value="1"/>
</dbReference>
<dbReference type="SMART" id="SM00091">
    <property type="entry name" value="PAS"/>
    <property type="match status" value="2"/>
</dbReference>
<dbReference type="SUPFAM" id="SSF55874">
    <property type="entry name" value="ATPase domain of HSP90 chaperone/DNA topoisomerase II/histidine kinase"/>
    <property type="match status" value="1"/>
</dbReference>
<dbReference type="SUPFAM" id="SSF55781">
    <property type="entry name" value="GAF domain-like"/>
    <property type="match status" value="2"/>
</dbReference>
<dbReference type="SUPFAM" id="SSF55785">
    <property type="entry name" value="PYP-like sensor domain (PAS domain)"/>
    <property type="match status" value="3"/>
</dbReference>
<dbReference type="PROSITE" id="PS50109">
    <property type="entry name" value="HIS_KIN"/>
    <property type="match status" value="1"/>
</dbReference>
<dbReference type="PROSITE" id="PS50112">
    <property type="entry name" value="PAS"/>
    <property type="match status" value="2"/>
</dbReference>
<dbReference type="PROSITE" id="PS00245">
    <property type="entry name" value="PHYTOCHROME_1"/>
    <property type="match status" value="1"/>
</dbReference>
<dbReference type="PROSITE" id="PS50046">
    <property type="entry name" value="PHYTOCHROME_2"/>
    <property type="match status" value="1"/>
</dbReference>
<feature type="chain" id="PRO_0000171961" description="Phytochrome 1">
    <location>
        <begin position="1"/>
        <end position="1118"/>
    </location>
</feature>
<feature type="domain" description="GAF">
    <location>
        <begin position="212"/>
        <end position="391"/>
    </location>
</feature>
<feature type="domain" description="PAS 1" evidence="3">
    <location>
        <begin position="606"/>
        <end position="677"/>
    </location>
</feature>
<feature type="domain" description="PAS 2" evidence="3">
    <location>
        <begin position="740"/>
        <end position="811"/>
    </location>
</feature>
<feature type="domain" description="Histidine kinase" evidence="2">
    <location>
        <begin position="887"/>
        <end position="1110"/>
    </location>
</feature>
<feature type="region of interest" description="Disordered" evidence="4">
    <location>
        <begin position="1"/>
        <end position="23"/>
    </location>
</feature>
<feature type="compositionally biased region" description="Low complexity" evidence="4">
    <location>
        <begin position="1"/>
        <end position="10"/>
    </location>
</feature>
<feature type="binding site" description="covalent" evidence="1">
    <location>
        <position position="317"/>
    </location>
    <ligand>
        <name>phytochromobilin</name>
        <dbReference type="ChEBI" id="CHEBI:189064"/>
    </ligand>
</feature>
<comment type="function">
    <text>Regulatory photoreceptor which exists in two forms that are reversibly interconvertible by light: the Pr form that absorbs maximally in the red region of the spectrum and the Pfr form that absorbs maximally in the far-red region. Photoconversion of Pr to Pfr induces an array of morphogenic responses, whereas reconversion of Pfr to Pr cancels the induction of those responses. Pfr controls the expression of a number of nuclear genes including those encoding the small subunit of ribulose-bisphosphate carboxylase, chlorophyll A/B binding protein, protochlorophyllide reductase, rRNA, etc. It also controls the expression of its own gene(s) in a negative feedback fashion.</text>
</comment>
<comment type="subunit">
    <text>Homodimer.</text>
</comment>
<comment type="PTM">
    <text evidence="1">Contains one covalently linked phytochromobilin chromophore.</text>
</comment>
<comment type="similarity">
    <text evidence="5">Belongs to the phytochrome family.</text>
</comment>
<gene>
    <name type="primary">PHY1</name>
</gene>
<proteinExistence type="evidence at transcript level"/>
<organism>
    <name type="scientific">Adiantum capillus-veneris</name>
    <name type="common">Maidenhair fern</name>
    <dbReference type="NCBI Taxonomy" id="13818"/>
    <lineage>
        <taxon>Eukaryota</taxon>
        <taxon>Viridiplantae</taxon>
        <taxon>Streptophyta</taxon>
        <taxon>Embryophyta</taxon>
        <taxon>Tracheophyta</taxon>
        <taxon>Polypodiopsida</taxon>
        <taxon>Polypodiidae</taxon>
        <taxon>Polypodiales</taxon>
        <taxon>Pteridineae</taxon>
        <taxon>Pteridaceae</taxon>
        <taxon>Vittarioideae</taxon>
        <taxon>Adiantum</taxon>
    </lineage>
</organism>
<sequence>MSSTRHSYSSGGSGKSKHGRRIAQTSADAKLYAAYEESSESGSFDYSQSVSAGKEGISSQLVTAYLQRMQRGGLVQQFGCLIAVEEETFRVLAYGANAPEMLDVATQAVPTMGQYSRLCIGADVRTLLSPASASALDRVIGVVDVSMFNPITVQSRSSGKPFYAILHRNDVGLVIDLEPIRPDDASITGGALQSHKLAAKAIARLQSLPGGDIGLLCDSVVEEVHELTGFDRVMAYKFHEDEHGEVVAEIRRTDLEPYIGLHYPATDIPQAARFLFMKNRVRMICDCRLPPVKLIQDKTLSQPMSLTGSKLRAPHGCHTQYMANMNSISSLVMAVIVNDSDDDSPGHSSQGIKLWGLVVCHHTSPRYVPFPVRSACEFLMQVFSLQLNMEVGMAAQVREKHILRTQTLLCDMLLRDAPIGIVSQSPNIMDLVTCDGAALYYGKKCWLLGTTPTEAQIVDIAAWLLDCHKDSTGLSTDSLAKTGYPEASCLGDAVCGLAAAKITATDFLFWFRSHTAKEVRWGGARHDPEERDDGRRMHPRSSFKAFLEVVKQQSLPWEDVEMDAIHSLQLILRGSFQDIDDSNTKTMIHARLNDLKLQGLDELSTVASEMVRLIETATAPILAVDGQGLINGWNGKVAELTGLSFETAMGKSLAKELVHEESKTIVERVLHLALEGEEEQDIEIHLRTYDQHKQKGVVILIVNTCCSRDVSNNVVGVCFVGQDVTGQKLVLDRFIRIQGDYKAIVQSLNPLIPPIFGADEYGFCSEWNAAMEKLSNWRREEVLGKMLVGEIFGLQMVCCRLQGQDVVTKLMIVLNDAVNGQESEKFPLVFYDRNGRRVEALLIASKRTDADGRITGVFCFLHTASPELLQALIIKRAKEKVDKELSYVKEELKKPLEGLAFTRTVLEGTNLTIEQRQLIKTNAWCERQLRKILEDDLNNIEEGYMDLEMSEFFMGSVIDAVISQGMAASRGKGVQILTEIPNDVKLMCLFGDQARLQQVLADLLFCAINHATTTNEDEKDWVTIKVSRTKTRLDDGVHLMHFEFRISHSGQGISEALVEEMTNKSQKWTPEGLAISISCTLIRLMNGDVKYTTDAGNKCFLVTIQFPLAHRDDATSVR</sequence>
<protein>
    <recommendedName>
        <fullName>Phytochrome 1</fullName>
    </recommendedName>
</protein>
<accession>P42496</accession>
<accession>O80419</accession>
<evidence type="ECO:0000250" key="1"/>
<evidence type="ECO:0000255" key="2">
    <source>
        <dbReference type="PROSITE-ProRule" id="PRU00107"/>
    </source>
</evidence>
<evidence type="ECO:0000255" key="3">
    <source>
        <dbReference type="PROSITE-ProRule" id="PRU00140"/>
    </source>
</evidence>
<evidence type="ECO:0000256" key="4">
    <source>
        <dbReference type="SAM" id="MobiDB-lite"/>
    </source>
</evidence>
<evidence type="ECO:0000305" key="5"/>
<keyword id="KW-0157">Chromophore</keyword>
<keyword id="KW-0600">Photoreceptor protein</keyword>
<keyword id="KW-0675">Receptor</keyword>
<keyword id="KW-0677">Repeat</keyword>
<keyword id="KW-0716">Sensory transduction</keyword>
<keyword id="KW-0804">Transcription</keyword>
<keyword id="KW-0805">Transcription regulation</keyword>
<reference key="1">
    <citation type="journal article" date="1993" name="Plant Cell Physiol.">
        <title>The deduced amino sequence of phytochrome from Adiantum includes consensus motifs present in phytochrome B from seed plants.</title>
        <authorList>
            <person name="Okamoto H."/>
            <person name="Hirano Y."/>
            <person name="Abe H."/>
            <person name="Tomizawa K."/>
            <person name="Furuya M."/>
            <person name="Wada M."/>
        </authorList>
    </citation>
    <scope>NUCLEOTIDE SEQUENCE</scope>
</reference>
<reference key="2">
    <citation type="submission" date="1998-07" db="EMBL/GenBank/DDBJ databases">
        <authorList>
            <person name="Nozue K."/>
            <person name="Fukuda S."/>
            <person name="Kanegae T."/>
            <person name="Wada M."/>
        </authorList>
    </citation>
    <scope>SEQUENCE REVISION TO 28; 93-97; 310; 345 AND 1044</scope>
</reference>